<reference key="1">
    <citation type="submission" date="2001-07" db="EMBL/GenBank/DDBJ databases">
        <title>Isolation of full-length cDNA clones from macaque brain cDNA libraries.</title>
        <authorList>
            <person name="Osada N."/>
            <person name="Hida M."/>
            <person name="Kusuda J."/>
            <person name="Tanuma R."/>
            <person name="Iseki K."/>
            <person name="Hirai M."/>
            <person name="Terao K."/>
            <person name="Suzuki Y."/>
            <person name="Sugano S."/>
            <person name="Hashimoto K."/>
        </authorList>
    </citation>
    <scope>NUCLEOTIDE SEQUENCE [LARGE SCALE MRNA]</scope>
    <source>
        <tissue>Temporal cortex</tissue>
    </source>
</reference>
<name>ZN614_MACFA</name>
<comment type="function">
    <text>May be involved in transcriptional regulation.</text>
</comment>
<comment type="subcellular location">
    <subcellularLocation>
        <location evidence="3">Nucleus</location>
    </subcellularLocation>
</comment>
<comment type="similarity">
    <text evidence="3">Belongs to the krueppel C2H2-type zinc-finger protein family.</text>
</comment>
<dbReference type="EMBL" id="AB066544">
    <property type="protein sequence ID" value="BAB62218.1"/>
    <property type="molecule type" value="mRNA"/>
</dbReference>
<dbReference type="RefSeq" id="NP_001306571.1">
    <property type="nucleotide sequence ID" value="NM_001319642.1"/>
</dbReference>
<dbReference type="SMR" id="Q95K49"/>
<dbReference type="eggNOG" id="KOG1721">
    <property type="taxonomic scope" value="Eukaryota"/>
</dbReference>
<dbReference type="Proteomes" id="UP000233100">
    <property type="component" value="Unplaced"/>
</dbReference>
<dbReference type="GO" id="GO:0005634">
    <property type="term" value="C:nucleus"/>
    <property type="evidence" value="ECO:0007669"/>
    <property type="project" value="UniProtKB-SubCell"/>
</dbReference>
<dbReference type="GO" id="GO:0000981">
    <property type="term" value="F:DNA-binding transcription factor activity, RNA polymerase II-specific"/>
    <property type="evidence" value="ECO:0007669"/>
    <property type="project" value="TreeGrafter"/>
</dbReference>
<dbReference type="GO" id="GO:0000978">
    <property type="term" value="F:RNA polymerase II cis-regulatory region sequence-specific DNA binding"/>
    <property type="evidence" value="ECO:0007669"/>
    <property type="project" value="TreeGrafter"/>
</dbReference>
<dbReference type="GO" id="GO:0008270">
    <property type="term" value="F:zinc ion binding"/>
    <property type="evidence" value="ECO:0007669"/>
    <property type="project" value="UniProtKB-KW"/>
</dbReference>
<dbReference type="CDD" id="cd07765">
    <property type="entry name" value="KRAB_A-box"/>
    <property type="match status" value="1"/>
</dbReference>
<dbReference type="FunFam" id="3.30.160.60:FF:003178">
    <property type="match status" value="3"/>
</dbReference>
<dbReference type="FunFam" id="3.30.160.60:FF:000029">
    <property type="entry name" value="GLI family zinc finger 4"/>
    <property type="match status" value="1"/>
</dbReference>
<dbReference type="FunFam" id="3.30.160.60:FF:000478">
    <property type="entry name" value="Zinc finger protein 133"/>
    <property type="match status" value="1"/>
</dbReference>
<dbReference type="FunFam" id="3.30.160.60:FF:002343">
    <property type="entry name" value="Zinc finger protein 33A"/>
    <property type="match status" value="2"/>
</dbReference>
<dbReference type="FunFam" id="3.30.160.60:FF:000848">
    <property type="entry name" value="Zinc finger protein 35"/>
    <property type="match status" value="1"/>
</dbReference>
<dbReference type="FunFam" id="3.30.160.60:FF:001173">
    <property type="entry name" value="Zinc finger protein 613"/>
    <property type="match status" value="1"/>
</dbReference>
<dbReference type="FunFam" id="3.30.160.60:FF:001672">
    <property type="entry name" value="Zinc finger protein 614"/>
    <property type="match status" value="1"/>
</dbReference>
<dbReference type="FunFam" id="3.30.160.60:FF:000495">
    <property type="entry name" value="zinc finger protein 668"/>
    <property type="match status" value="1"/>
</dbReference>
<dbReference type="Gene3D" id="6.10.140.140">
    <property type="match status" value="1"/>
</dbReference>
<dbReference type="Gene3D" id="3.30.160.60">
    <property type="entry name" value="Classic Zinc Finger"/>
    <property type="match status" value="11"/>
</dbReference>
<dbReference type="InterPro" id="IPR050752">
    <property type="entry name" value="C2H2-ZF_domain"/>
</dbReference>
<dbReference type="InterPro" id="IPR001909">
    <property type="entry name" value="KRAB"/>
</dbReference>
<dbReference type="InterPro" id="IPR036051">
    <property type="entry name" value="KRAB_dom_sf"/>
</dbReference>
<dbReference type="InterPro" id="IPR036236">
    <property type="entry name" value="Znf_C2H2_sf"/>
</dbReference>
<dbReference type="InterPro" id="IPR013087">
    <property type="entry name" value="Znf_C2H2_type"/>
</dbReference>
<dbReference type="PANTHER" id="PTHR24384">
    <property type="entry name" value="FINGER PUTATIVE TRANSCRIPTION FACTOR FAMILY-RELATED"/>
    <property type="match status" value="1"/>
</dbReference>
<dbReference type="PANTHER" id="PTHR24384:SF242">
    <property type="entry name" value="ZINC FINGER PROTEIN 628"/>
    <property type="match status" value="1"/>
</dbReference>
<dbReference type="Pfam" id="PF01352">
    <property type="entry name" value="KRAB"/>
    <property type="match status" value="1"/>
</dbReference>
<dbReference type="Pfam" id="PF00096">
    <property type="entry name" value="zf-C2H2"/>
    <property type="match status" value="10"/>
</dbReference>
<dbReference type="SMART" id="SM00349">
    <property type="entry name" value="KRAB"/>
    <property type="match status" value="1"/>
</dbReference>
<dbReference type="SMART" id="SM00355">
    <property type="entry name" value="ZnF_C2H2"/>
    <property type="match status" value="11"/>
</dbReference>
<dbReference type="SUPFAM" id="SSF57667">
    <property type="entry name" value="beta-beta-alpha zinc fingers"/>
    <property type="match status" value="7"/>
</dbReference>
<dbReference type="SUPFAM" id="SSF109640">
    <property type="entry name" value="KRAB domain (Kruppel-associated box)"/>
    <property type="match status" value="1"/>
</dbReference>
<dbReference type="PROSITE" id="PS50805">
    <property type="entry name" value="KRAB"/>
    <property type="match status" value="1"/>
</dbReference>
<dbReference type="PROSITE" id="PS00028">
    <property type="entry name" value="ZINC_FINGER_C2H2_1"/>
    <property type="match status" value="11"/>
</dbReference>
<dbReference type="PROSITE" id="PS50157">
    <property type="entry name" value="ZINC_FINGER_C2H2_2"/>
    <property type="match status" value="11"/>
</dbReference>
<evidence type="ECO:0000255" key="1">
    <source>
        <dbReference type="PROSITE-ProRule" id="PRU00042"/>
    </source>
</evidence>
<evidence type="ECO:0000255" key="2">
    <source>
        <dbReference type="PROSITE-ProRule" id="PRU00119"/>
    </source>
</evidence>
<evidence type="ECO:0000305" key="3"/>
<organism>
    <name type="scientific">Macaca fascicularis</name>
    <name type="common">Crab-eating macaque</name>
    <name type="synonym">Cynomolgus monkey</name>
    <dbReference type="NCBI Taxonomy" id="9541"/>
    <lineage>
        <taxon>Eukaryota</taxon>
        <taxon>Metazoa</taxon>
        <taxon>Chordata</taxon>
        <taxon>Craniata</taxon>
        <taxon>Vertebrata</taxon>
        <taxon>Euteleostomi</taxon>
        <taxon>Mammalia</taxon>
        <taxon>Eutheria</taxon>
        <taxon>Euarchontoglires</taxon>
        <taxon>Primates</taxon>
        <taxon>Haplorrhini</taxon>
        <taxon>Catarrhini</taxon>
        <taxon>Cercopithecidae</taxon>
        <taxon>Cercopithecinae</taxon>
        <taxon>Macaca</taxon>
    </lineage>
</organism>
<protein>
    <recommendedName>
        <fullName>Zinc finger protein 614</fullName>
    </recommendedName>
</protein>
<proteinExistence type="evidence at transcript level"/>
<feature type="chain" id="PRO_0000234599" description="Zinc finger protein 614">
    <location>
        <begin position="1"/>
        <end position="582"/>
    </location>
</feature>
<feature type="domain" description="KRAB" evidence="2">
    <location>
        <begin position="8"/>
        <end position="79"/>
    </location>
</feature>
<feature type="zinc finger region" description="C2H2-type 1" evidence="1">
    <location>
        <begin position="202"/>
        <end position="224"/>
    </location>
</feature>
<feature type="zinc finger region" description="C2H2-type 2; degenerate" evidence="1">
    <location>
        <begin position="254"/>
        <end position="278"/>
    </location>
</feature>
<feature type="zinc finger region" description="C2H2-type 3" evidence="1">
    <location>
        <begin position="284"/>
        <end position="306"/>
    </location>
</feature>
<feature type="zinc finger region" description="C2H2-type 4" evidence="1">
    <location>
        <begin position="312"/>
        <end position="334"/>
    </location>
</feature>
<feature type="zinc finger region" description="C2H2-type 5" evidence="1">
    <location>
        <begin position="340"/>
        <end position="362"/>
    </location>
</feature>
<feature type="zinc finger region" description="C2H2-type 6" evidence="1">
    <location>
        <begin position="368"/>
        <end position="390"/>
    </location>
</feature>
<feature type="zinc finger region" description="C2H2-type 7" evidence="1">
    <location>
        <begin position="396"/>
        <end position="418"/>
    </location>
</feature>
<feature type="zinc finger region" description="C2H2-type 8" evidence="1">
    <location>
        <begin position="424"/>
        <end position="446"/>
    </location>
</feature>
<feature type="zinc finger region" description="C2H2-type 9" evidence="1">
    <location>
        <begin position="452"/>
        <end position="474"/>
    </location>
</feature>
<feature type="zinc finger region" description="C2H2-type 10" evidence="1">
    <location>
        <begin position="480"/>
        <end position="502"/>
    </location>
</feature>
<feature type="zinc finger region" description="C2H2-type 11" evidence="1">
    <location>
        <begin position="508"/>
        <end position="530"/>
    </location>
</feature>
<feature type="zinc finger region" description="C2H2-type 12" evidence="1">
    <location>
        <begin position="536"/>
        <end position="558"/>
    </location>
</feature>
<gene>
    <name type="primary">ZNF614</name>
    <name type="ORF">QtrA-10780</name>
</gene>
<sequence>MIKTQESLTLEDVAVEFSWEEWQLLDTAQKNLYRDVMVENYNHLVSLGYQTSKPDVLSKLAHGQEPWITVAKIQNKNCPGIGKADSLLQEHSLNQRLLKSVQQCNGQNTLRNTVHLSKTHFPIVQNHDTFDLYRKNLKSSLSLINQKRRHGINNPVEFIGGEKTLKHECMHAKTRFSENAKCIHTKFQVFKHQRTQKIEKPHACIECEQTFLRKSQLIYHENIHIPENPGSGQCEKLSRSVLFTKHLKTNTRDKICIPNEYRKGSTVNSRLIAHQQTHTEEKSYMCSECGKGFTMKRYLIAHQRTHSGEKPYVCNECGKGFTVKSNLIVHQRTHTGEKPYICSECGKGFTMKRYLVVHQRTHTGEKPYICSECGKGFTVKSNLIVHQRSHTGEKSYICSECGKGFTVKRTLIIHQRTHTGEKSYICNECGKGFTTKRTLIIHQRTHTGEKPYECNECGKAFSQKICLIQHERCHTGKTPFVCTECGKSYSHKYGLITHQRIHTGEKPYECNECGKAFTTKSVLNVHQRTHTGERPYGCSDCEKAFSHLSNLVKHKKMHTREMGRISQVENSCNEESQLLPYK</sequence>
<accession>Q95K49</accession>
<keyword id="KW-0238">DNA-binding</keyword>
<keyword id="KW-0479">Metal-binding</keyword>
<keyword id="KW-0539">Nucleus</keyword>
<keyword id="KW-1185">Reference proteome</keyword>
<keyword id="KW-0677">Repeat</keyword>
<keyword id="KW-0804">Transcription</keyword>
<keyword id="KW-0805">Transcription regulation</keyword>
<keyword id="KW-0862">Zinc</keyword>
<keyword id="KW-0863">Zinc-finger</keyword>